<feature type="chain" id="PRO_0000357209" description="Methylthioribose-1-phosphate isomerase">
    <location>
        <begin position="1"/>
        <end position="347"/>
    </location>
</feature>
<feature type="active site" description="Proton donor" evidence="1">
    <location>
        <position position="240"/>
    </location>
</feature>
<feature type="binding site" evidence="1">
    <location>
        <begin position="47"/>
        <end position="49"/>
    </location>
    <ligand>
        <name>substrate</name>
    </ligand>
</feature>
<feature type="binding site" evidence="1">
    <location>
        <position position="90"/>
    </location>
    <ligand>
        <name>substrate</name>
    </ligand>
</feature>
<feature type="binding site" evidence="1">
    <location>
        <position position="199"/>
    </location>
    <ligand>
        <name>substrate</name>
    </ligand>
</feature>
<feature type="binding site" evidence="1">
    <location>
        <begin position="250"/>
        <end position="251"/>
    </location>
    <ligand>
        <name>substrate</name>
    </ligand>
</feature>
<feature type="site" description="Transition state stabilizer" evidence="1">
    <location>
        <position position="160"/>
    </location>
</feature>
<name>MTNA_NATTJ</name>
<organism>
    <name type="scientific">Natranaerobius thermophilus (strain ATCC BAA-1301 / DSM 18059 / JW/NM-WN-LF)</name>
    <dbReference type="NCBI Taxonomy" id="457570"/>
    <lineage>
        <taxon>Bacteria</taxon>
        <taxon>Bacillati</taxon>
        <taxon>Bacillota</taxon>
        <taxon>Clostridia</taxon>
        <taxon>Natranaerobiales</taxon>
        <taxon>Natranaerobiaceae</taxon>
        <taxon>Natranaerobius</taxon>
    </lineage>
</organism>
<sequence>MVSVKPLKFEDDELLLLDQRKLPGKEEYFTCKTYQDVHFAIKEMVCRGAPLIGAVGAYGVALACREFINESQEKFQQETKRAISELSSARPTAVNLFWALNKMNKLLGQVMEENTAPEDIYPIILNEAHKISDQELQRNYRIAEFGDQVISNGDKILTHCNTGALATTGYGTALGVIRQAHYNHKDIFVYVDETRPRLQGAKLTAWELKQEQLPFALIPDSSAAVLIKNGDIDVIFVGADRIASNGDTANKIGTFMLSILAKKYKVPFYVVAPVSTIDFQAKNGDDITIEERSSKEVTEIDGVRVAPTDIQVYNPAFDITPAENITGIITEKGIIGPNNREIMTIQE</sequence>
<reference key="1">
    <citation type="submission" date="2008-04" db="EMBL/GenBank/DDBJ databases">
        <title>Complete sequence of chromosome of Natranaerobius thermophilus JW/NM-WN-LF.</title>
        <authorList>
            <consortium name="US DOE Joint Genome Institute"/>
            <person name="Copeland A."/>
            <person name="Lucas S."/>
            <person name="Lapidus A."/>
            <person name="Glavina del Rio T."/>
            <person name="Dalin E."/>
            <person name="Tice H."/>
            <person name="Bruce D."/>
            <person name="Goodwin L."/>
            <person name="Pitluck S."/>
            <person name="Chertkov O."/>
            <person name="Brettin T."/>
            <person name="Detter J.C."/>
            <person name="Han C."/>
            <person name="Kuske C.R."/>
            <person name="Schmutz J."/>
            <person name="Larimer F."/>
            <person name="Land M."/>
            <person name="Hauser L."/>
            <person name="Kyrpides N."/>
            <person name="Lykidis A."/>
            <person name="Mesbah N.M."/>
            <person name="Wiegel J."/>
        </authorList>
    </citation>
    <scope>NUCLEOTIDE SEQUENCE [LARGE SCALE GENOMIC DNA]</scope>
    <source>
        <strain>ATCC BAA-1301 / DSM 18059 / JW/NM-WN-LF</strain>
    </source>
</reference>
<proteinExistence type="inferred from homology"/>
<accession>B2A5S2</accession>
<evidence type="ECO:0000255" key="1">
    <source>
        <dbReference type="HAMAP-Rule" id="MF_01678"/>
    </source>
</evidence>
<evidence type="ECO:0000305" key="2"/>
<dbReference type="EC" id="5.3.1.23" evidence="1"/>
<dbReference type="EMBL" id="CP001034">
    <property type="protein sequence ID" value="ACB84015.1"/>
    <property type="molecule type" value="Genomic_DNA"/>
</dbReference>
<dbReference type="RefSeq" id="WP_012446902.1">
    <property type="nucleotide sequence ID" value="NZ_CP144221.1"/>
</dbReference>
<dbReference type="SMR" id="B2A5S2"/>
<dbReference type="FunCoup" id="B2A5S2">
    <property type="interactions" value="344"/>
</dbReference>
<dbReference type="STRING" id="457570.Nther_0419"/>
<dbReference type="KEGG" id="nth:Nther_0419"/>
<dbReference type="eggNOG" id="COG0182">
    <property type="taxonomic scope" value="Bacteria"/>
</dbReference>
<dbReference type="HOGENOM" id="CLU_016218_1_2_9"/>
<dbReference type="InParanoid" id="B2A5S2"/>
<dbReference type="OrthoDB" id="9803436at2"/>
<dbReference type="UniPathway" id="UPA00904">
    <property type="reaction ID" value="UER00874"/>
</dbReference>
<dbReference type="Proteomes" id="UP000001683">
    <property type="component" value="Chromosome"/>
</dbReference>
<dbReference type="GO" id="GO:0046523">
    <property type="term" value="F:S-methyl-5-thioribose-1-phosphate isomerase activity"/>
    <property type="evidence" value="ECO:0007669"/>
    <property type="project" value="UniProtKB-UniRule"/>
</dbReference>
<dbReference type="GO" id="GO:0019509">
    <property type="term" value="P:L-methionine salvage from methylthioadenosine"/>
    <property type="evidence" value="ECO:0007669"/>
    <property type="project" value="UniProtKB-UniRule"/>
</dbReference>
<dbReference type="FunFam" id="1.20.120.420:FF:000003">
    <property type="entry name" value="Methylthioribose-1-phosphate isomerase"/>
    <property type="match status" value="1"/>
</dbReference>
<dbReference type="FunFam" id="3.40.50.10470:FF:000006">
    <property type="entry name" value="Methylthioribose-1-phosphate isomerase"/>
    <property type="match status" value="1"/>
</dbReference>
<dbReference type="Gene3D" id="1.20.120.420">
    <property type="entry name" value="translation initiation factor eif-2b, domain 1"/>
    <property type="match status" value="1"/>
</dbReference>
<dbReference type="Gene3D" id="3.40.50.10470">
    <property type="entry name" value="Translation initiation factor eif-2b, domain 2"/>
    <property type="match status" value="1"/>
</dbReference>
<dbReference type="HAMAP" id="MF_01678">
    <property type="entry name" value="Salvage_MtnA"/>
    <property type="match status" value="1"/>
</dbReference>
<dbReference type="InterPro" id="IPR000649">
    <property type="entry name" value="IF-2B-related"/>
</dbReference>
<dbReference type="InterPro" id="IPR005251">
    <property type="entry name" value="IF-M1Pi"/>
</dbReference>
<dbReference type="InterPro" id="IPR042529">
    <property type="entry name" value="IF_2B-like_C"/>
</dbReference>
<dbReference type="InterPro" id="IPR011559">
    <property type="entry name" value="Initiation_fac_2B_a/b/d"/>
</dbReference>
<dbReference type="InterPro" id="IPR027363">
    <property type="entry name" value="M1Pi_N"/>
</dbReference>
<dbReference type="InterPro" id="IPR037171">
    <property type="entry name" value="NagB/RpiA_transferase-like"/>
</dbReference>
<dbReference type="NCBIfam" id="TIGR00524">
    <property type="entry name" value="eIF-2B_rel"/>
    <property type="match status" value="1"/>
</dbReference>
<dbReference type="NCBIfam" id="NF004326">
    <property type="entry name" value="PRK05720.1"/>
    <property type="match status" value="1"/>
</dbReference>
<dbReference type="NCBIfam" id="TIGR00512">
    <property type="entry name" value="salvage_mtnA"/>
    <property type="match status" value="1"/>
</dbReference>
<dbReference type="PANTHER" id="PTHR43475">
    <property type="entry name" value="METHYLTHIORIBOSE-1-PHOSPHATE ISOMERASE"/>
    <property type="match status" value="1"/>
</dbReference>
<dbReference type="PANTHER" id="PTHR43475:SF1">
    <property type="entry name" value="METHYLTHIORIBOSE-1-PHOSPHATE ISOMERASE"/>
    <property type="match status" value="1"/>
</dbReference>
<dbReference type="Pfam" id="PF01008">
    <property type="entry name" value="IF-2B"/>
    <property type="match status" value="1"/>
</dbReference>
<dbReference type="SUPFAM" id="SSF100950">
    <property type="entry name" value="NagB/RpiA/CoA transferase-like"/>
    <property type="match status" value="1"/>
</dbReference>
<protein>
    <recommendedName>
        <fullName evidence="1">Methylthioribose-1-phosphate isomerase</fullName>
        <shortName evidence="1">M1Pi</shortName>
        <shortName evidence="1">MTR-1-P isomerase</shortName>
        <ecNumber evidence="1">5.3.1.23</ecNumber>
    </recommendedName>
    <alternativeName>
        <fullName evidence="1">S-methyl-5-thioribose-1-phosphate isomerase</fullName>
    </alternativeName>
</protein>
<keyword id="KW-0028">Amino-acid biosynthesis</keyword>
<keyword id="KW-0413">Isomerase</keyword>
<keyword id="KW-0486">Methionine biosynthesis</keyword>
<keyword id="KW-1185">Reference proteome</keyword>
<gene>
    <name evidence="1" type="primary">mtnA</name>
    <name type="ordered locus">Nther_0419</name>
</gene>
<comment type="function">
    <text evidence="1">Catalyzes the interconversion of methylthioribose-1-phosphate (MTR-1-P) into methylthioribulose-1-phosphate (MTRu-1-P).</text>
</comment>
<comment type="catalytic activity">
    <reaction evidence="1">
        <text>5-(methylsulfanyl)-alpha-D-ribose 1-phosphate = 5-(methylsulfanyl)-D-ribulose 1-phosphate</text>
        <dbReference type="Rhea" id="RHEA:19989"/>
        <dbReference type="ChEBI" id="CHEBI:58533"/>
        <dbReference type="ChEBI" id="CHEBI:58548"/>
        <dbReference type="EC" id="5.3.1.23"/>
    </reaction>
</comment>
<comment type="pathway">
    <text evidence="1">Amino-acid biosynthesis; L-methionine biosynthesis via salvage pathway; L-methionine from S-methyl-5-thio-alpha-D-ribose 1-phosphate: step 1/6.</text>
</comment>
<comment type="similarity">
    <text evidence="2">Belongs to the eIF-2B alpha/beta/delta subunits family. MtnA subfamily.</text>
</comment>